<keyword id="KW-0150">Chloroplast</keyword>
<keyword id="KW-0934">Plastid</keyword>
<keyword id="KW-0687">Ribonucleoprotein</keyword>
<keyword id="KW-0689">Ribosomal protein</keyword>
<keyword id="KW-0694">RNA-binding</keyword>
<keyword id="KW-0699">rRNA-binding</keyword>
<protein>
    <recommendedName>
        <fullName evidence="1">Small ribosomal subunit protein uS14c</fullName>
    </recommendedName>
    <alternativeName>
        <fullName evidence="2">30S ribosomal protein S14, chloroplastic</fullName>
    </alternativeName>
</protein>
<geneLocation type="chloroplast"/>
<sequence>MARKSLIQREKKRQKLEQKYHLIRQSLKNEISKVPSLSEKWEIHGKLQSPPRNSAPTRLHRRCFLTGRPRANYRDFGLSGHILREMVHACLLPGATRSSW</sequence>
<accession>Q4VZN5</accession>
<accession>A5J1T2</accession>
<reference key="1">
    <citation type="submission" date="2002-10" db="EMBL/GenBank/DDBJ databases">
        <authorList>
            <person name="Kim J.-S."/>
            <person name="Choi D.-W."/>
            <person name="Jeong W.J."/>
            <person name="Jung J.-D."/>
            <person name="Jeong S.W."/>
            <person name="Lim H.K."/>
            <person name="Park H.-W."/>
            <person name="Lee J.-A."/>
            <person name="Liu J.R."/>
            <person name="Cho K.Y."/>
        </authorList>
    </citation>
    <scope>NUCLEOTIDE SEQUENCE [GENOMIC DNA]</scope>
    <source>
        <strain>cv. Baekmibaekdadagi</strain>
    </source>
</reference>
<reference key="2">
    <citation type="journal article" date="2006" name="Plant Cell Rep.">
        <title>Complete sequence and organization of the cucumber (Cucumis sativus L. cv. Baekmibaekdadagi) chloroplast genome.</title>
        <authorList>
            <person name="Kim J.-S."/>
            <person name="Jung J.D."/>
            <person name="Lee J.-A."/>
            <person name="Park H.-W."/>
            <person name="Oh K.-H."/>
            <person name="Jeong W.J."/>
            <person name="Choi D.-W."/>
            <person name="Liu J.R."/>
            <person name="Cho K.Y."/>
        </authorList>
    </citation>
    <scope>NUCLEOTIDE SEQUENCE [LARGE SCALE GENOMIC DNA]</scope>
    <source>
        <strain>cv. Baekmibaekdadagi</strain>
    </source>
</reference>
<reference key="3">
    <citation type="journal article" date="2007" name="Cell. Mol. Biol. Lett.">
        <title>The complete structure of the cucumber (Cucumis sativus L.) chloroplast genome: its composition and comparative analysis.</title>
        <authorList>
            <person name="Plader W.W."/>
            <person name="Yukawa Y."/>
            <person name="Sugiura M."/>
            <person name="Malepszy S."/>
        </authorList>
    </citation>
    <scope>NUCLEOTIDE SEQUENCE [LARGE SCALE GENOMIC DNA]</scope>
    <source>
        <strain>cv. Borszczagowski</strain>
    </source>
</reference>
<reference key="4">
    <citation type="journal article" date="2007" name="Genome">
        <title>Sequencing cucumber (Cucumis sativus L.) chloroplast genomes identifies differences between chilling-tolerant and -susceptible cucumber lines.</title>
        <authorList>
            <person name="Chung S.-M."/>
            <person name="Gordon V.S."/>
            <person name="Staub J.E."/>
        </authorList>
    </citation>
    <scope>NUCLEOTIDE SEQUENCE [LARGE SCALE GENOMIC DNA]</scope>
    <source>
        <strain>cv. Chipper</strain>
        <strain>cv. Gy14</strain>
    </source>
</reference>
<name>RR14_CUCSA</name>
<evidence type="ECO:0000255" key="1">
    <source>
        <dbReference type="HAMAP-Rule" id="MF_00537"/>
    </source>
</evidence>
<evidence type="ECO:0000305" key="2"/>
<comment type="function">
    <text evidence="1">Binds 16S rRNA, required for the assembly of 30S particles.</text>
</comment>
<comment type="subunit">
    <text evidence="1">Part of the 30S ribosomal subunit.</text>
</comment>
<comment type="subcellular location">
    <subcellularLocation>
        <location>Plastid</location>
        <location>Chloroplast</location>
    </subcellularLocation>
</comment>
<comment type="similarity">
    <text evidence="1">Belongs to the universal ribosomal protein uS14 family.</text>
</comment>
<proteinExistence type="inferred from homology"/>
<organism>
    <name type="scientific">Cucumis sativus</name>
    <name type="common">Cucumber</name>
    <dbReference type="NCBI Taxonomy" id="3659"/>
    <lineage>
        <taxon>Eukaryota</taxon>
        <taxon>Viridiplantae</taxon>
        <taxon>Streptophyta</taxon>
        <taxon>Embryophyta</taxon>
        <taxon>Tracheophyta</taxon>
        <taxon>Spermatophyta</taxon>
        <taxon>Magnoliopsida</taxon>
        <taxon>eudicotyledons</taxon>
        <taxon>Gunneridae</taxon>
        <taxon>Pentapetalae</taxon>
        <taxon>rosids</taxon>
        <taxon>fabids</taxon>
        <taxon>Cucurbitales</taxon>
        <taxon>Cucurbitaceae</taxon>
        <taxon>Benincaseae</taxon>
        <taxon>Cucumis</taxon>
    </lineage>
</organism>
<dbReference type="EMBL" id="AY173932">
    <property type="protein sequence ID" value="AAO38177.1"/>
    <property type="molecule type" value="Genomic_DNA"/>
</dbReference>
<dbReference type="EMBL" id="DQ119058">
    <property type="protein sequence ID" value="AAZ94649.1"/>
    <property type="molecule type" value="Genomic_DNA"/>
</dbReference>
<dbReference type="EMBL" id="AJ970307">
    <property type="protein sequence ID" value="CAJ00756.1"/>
    <property type="molecule type" value="Genomic_DNA"/>
</dbReference>
<dbReference type="EMBL" id="DQ865975">
    <property type="protein sequence ID" value="ABI97415.1"/>
    <property type="molecule type" value="Genomic_DNA"/>
</dbReference>
<dbReference type="EMBL" id="DQ865976">
    <property type="protein sequence ID" value="ABI98744.1"/>
    <property type="molecule type" value="Genomic_DNA"/>
</dbReference>
<dbReference type="RefSeq" id="YP_247597.1">
    <property type="nucleotide sequence ID" value="NC_007144.1"/>
</dbReference>
<dbReference type="SMR" id="Q4VZN5"/>
<dbReference type="GeneID" id="3429308"/>
<dbReference type="KEGG" id="csv:3429308"/>
<dbReference type="OrthoDB" id="413436at2759"/>
<dbReference type="GO" id="GO:0009507">
    <property type="term" value="C:chloroplast"/>
    <property type="evidence" value="ECO:0007669"/>
    <property type="project" value="UniProtKB-SubCell"/>
</dbReference>
<dbReference type="GO" id="GO:1990904">
    <property type="term" value="C:ribonucleoprotein complex"/>
    <property type="evidence" value="ECO:0007669"/>
    <property type="project" value="UniProtKB-KW"/>
</dbReference>
<dbReference type="GO" id="GO:0005840">
    <property type="term" value="C:ribosome"/>
    <property type="evidence" value="ECO:0007669"/>
    <property type="project" value="UniProtKB-KW"/>
</dbReference>
<dbReference type="GO" id="GO:0019843">
    <property type="term" value="F:rRNA binding"/>
    <property type="evidence" value="ECO:0007669"/>
    <property type="project" value="UniProtKB-UniRule"/>
</dbReference>
<dbReference type="GO" id="GO:0003735">
    <property type="term" value="F:structural constituent of ribosome"/>
    <property type="evidence" value="ECO:0007669"/>
    <property type="project" value="InterPro"/>
</dbReference>
<dbReference type="GO" id="GO:0006412">
    <property type="term" value="P:translation"/>
    <property type="evidence" value="ECO:0007669"/>
    <property type="project" value="UniProtKB-UniRule"/>
</dbReference>
<dbReference type="FunFam" id="1.10.287.1480:FF:000001">
    <property type="entry name" value="30S ribosomal protein S14"/>
    <property type="match status" value="1"/>
</dbReference>
<dbReference type="Gene3D" id="1.10.287.1480">
    <property type="match status" value="1"/>
</dbReference>
<dbReference type="HAMAP" id="MF_00537">
    <property type="entry name" value="Ribosomal_uS14_1"/>
    <property type="match status" value="1"/>
</dbReference>
<dbReference type="InterPro" id="IPR001209">
    <property type="entry name" value="Ribosomal_uS14"/>
</dbReference>
<dbReference type="InterPro" id="IPR023036">
    <property type="entry name" value="Ribosomal_uS14_bac/plastid"/>
</dbReference>
<dbReference type="InterPro" id="IPR018271">
    <property type="entry name" value="Ribosomal_uS14_CS"/>
</dbReference>
<dbReference type="NCBIfam" id="NF006477">
    <property type="entry name" value="PRK08881.1"/>
    <property type="match status" value="1"/>
</dbReference>
<dbReference type="PANTHER" id="PTHR19836">
    <property type="entry name" value="30S RIBOSOMAL PROTEIN S14"/>
    <property type="match status" value="1"/>
</dbReference>
<dbReference type="PANTHER" id="PTHR19836:SF19">
    <property type="entry name" value="SMALL RIBOSOMAL SUBUNIT PROTEIN US14M"/>
    <property type="match status" value="1"/>
</dbReference>
<dbReference type="Pfam" id="PF00253">
    <property type="entry name" value="Ribosomal_S14"/>
    <property type="match status" value="1"/>
</dbReference>
<dbReference type="SUPFAM" id="SSF57716">
    <property type="entry name" value="Glucocorticoid receptor-like (DNA-binding domain)"/>
    <property type="match status" value="1"/>
</dbReference>
<dbReference type="PROSITE" id="PS00527">
    <property type="entry name" value="RIBOSOMAL_S14"/>
    <property type="match status" value="1"/>
</dbReference>
<gene>
    <name evidence="1" type="primary">rps14</name>
    <name type="ordered locus">CsCp032</name>
</gene>
<feature type="chain" id="PRO_0000276673" description="Small ribosomal subunit protein uS14c">
    <location>
        <begin position="1"/>
        <end position="100"/>
    </location>
</feature>